<name>DGKQ_RAT</name>
<reference key="1">
    <citation type="journal article" date="2004" name="Nature">
        <title>Genome sequence of the Brown Norway rat yields insights into mammalian evolution.</title>
        <authorList>
            <person name="Gibbs R.A."/>
            <person name="Weinstock G.M."/>
            <person name="Metzker M.L."/>
            <person name="Muzny D.M."/>
            <person name="Sodergren E.J."/>
            <person name="Scherer S."/>
            <person name="Scott G."/>
            <person name="Steffen D."/>
            <person name="Worley K.C."/>
            <person name="Burch P.E."/>
            <person name="Okwuonu G."/>
            <person name="Hines S."/>
            <person name="Lewis L."/>
            <person name="Deramo C."/>
            <person name="Delgado O."/>
            <person name="Dugan-Rocha S."/>
            <person name="Miner G."/>
            <person name="Morgan M."/>
            <person name="Hawes A."/>
            <person name="Gill R."/>
            <person name="Holt R.A."/>
            <person name="Adams M.D."/>
            <person name="Amanatides P.G."/>
            <person name="Baden-Tillson H."/>
            <person name="Barnstead M."/>
            <person name="Chin S."/>
            <person name="Evans C.A."/>
            <person name="Ferriera S."/>
            <person name="Fosler C."/>
            <person name="Glodek A."/>
            <person name="Gu Z."/>
            <person name="Jennings D."/>
            <person name="Kraft C.L."/>
            <person name="Nguyen T."/>
            <person name="Pfannkoch C.M."/>
            <person name="Sitter C."/>
            <person name="Sutton G.G."/>
            <person name="Venter J.C."/>
            <person name="Woodage T."/>
            <person name="Smith D."/>
            <person name="Lee H.-M."/>
            <person name="Gustafson E."/>
            <person name="Cahill P."/>
            <person name="Kana A."/>
            <person name="Doucette-Stamm L."/>
            <person name="Weinstock K."/>
            <person name="Fechtel K."/>
            <person name="Weiss R.B."/>
            <person name="Dunn D.M."/>
            <person name="Green E.D."/>
            <person name="Blakesley R.W."/>
            <person name="Bouffard G.G."/>
            <person name="De Jong P.J."/>
            <person name="Osoegawa K."/>
            <person name="Zhu B."/>
            <person name="Marra M."/>
            <person name="Schein J."/>
            <person name="Bosdet I."/>
            <person name="Fjell C."/>
            <person name="Jones S."/>
            <person name="Krzywinski M."/>
            <person name="Mathewson C."/>
            <person name="Siddiqui A."/>
            <person name="Wye N."/>
            <person name="McPherson J."/>
            <person name="Zhao S."/>
            <person name="Fraser C.M."/>
            <person name="Shetty J."/>
            <person name="Shatsman S."/>
            <person name="Geer K."/>
            <person name="Chen Y."/>
            <person name="Abramzon S."/>
            <person name="Nierman W.C."/>
            <person name="Havlak P.H."/>
            <person name="Chen R."/>
            <person name="Durbin K.J."/>
            <person name="Egan A."/>
            <person name="Ren Y."/>
            <person name="Song X.-Z."/>
            <person name="Li B."/>
            <person name="Liu Y."/>
            <person name="Qin X."/>
            <person name="Cawley S."/>
            <person name="Cooney A.J."/>
            <person name="D'Souza L.M."/>
            <person name="Martin K."/>
            <person name="Wu J.Q."/>
            <person name="Gonzalez-Garay M.L."/>
            <person name="Jackson A.R."/>
            <person name="Kalafus K.J."/>
            <person name="McLeod M.P."/>
            <person name="Milosavljevic A."/>
            <person name="Virk D."/>
            <person name="Volkov A."/>
            <person name="Wheeler D.A."/>
            <person name="Zhang Z."/>
            <person name="Bailey J.A."/>
            <person name="Eichler E.E."/>
            <person name="Tuzun E."/>
            <person name="Birney E."/>
            <person name="Mongin E."/>
            <person name="Ureta-Vidal A."/>
            <person name="Woodwark C."/>
            <person name="Zdobnov E."/>
            <person name="Bork P."/>
            <person name="Suyama M."/>
            <person name="Torrents D."/>
            <person name="Alexandersson M."/>
            <person name="Trask B.J."/>
            <person name="Young J.M."/>
            <person name="Huang H."/>
            <person name="Wang H."/>
            <person name="Xing H."/>
            <person name="Daniels S."/>
            <person name="Gietzen D."/>
            <person name="Schmidt J."/>
            <person name="Stevens K."/>
            <person name="Vitt U."/>
            <person name="Wingrove J."/>
            <person name="Camara F."/>
            <person name="Mar Alba M."/>
            <person name="Abril J.F."/>
            <person name="Guigo R."/>
            <person name="Smit A."/>
            <person name="Dubchak I."/>
            <person name="Rubin E.M."/>
            <person name="Couronne O."/>
            <person name="Poliakov A."/>
            <person name="Huebner N."/>
            <person name="Ganten D."/>
            <person name="Goesele C."/>
            <person name="Hummel O."/>
            <person name="Kreitler T."/>
            <person name="Lee Y.-A."/>
            <person name="Monti J."/>
            <person name="Schulz H."/>
            <person name="Zimdahl H."/>
            <person name="Himmelbauer H."/>
            <person name="Lehrach H."/>
            <person name="Jacob H.J."/>
            <person name="Bromberg S."/>
            <person name="Gullings-Handley J."/>
            <person name="Jensen-Seaman M.I."/>
            <person name="Kwitek A.E."/>
            <person name="Lazar J."/>
            <person name="Pasko D."/>
            <person name="Tonellato P.J."/>
            <person name="Twigger S."/>
            <person name="Ponting C.P."/>
            <person name="Duarte J.M."/>
            <person name="Rice S."/>
            <person name="Goodstadt L."/>
            <person name="Beatson S.A."/>
            <person name="Emes R.D."/>
            <person name="Winter E.E."/>
            <person name="Webber C."/>
            <person name="Brandt P."/>
            <person name="Nyakatura G."/>
            <person name="Adetobi M."/>
            <person name="Chiaromonte F."/>
            <person name="Elnitski L."/>
            <person name="Eswara P."/>
            <person name="Hardison R.C."/>
            <person name="Hou M."/>
            <person name="Kolbe D."/>
            <person name="Makova K."/>
            <person name="Miller W."/>
            <person name="Nekrutenko A."/>
            <person name="Riemer C."/>
            <person name="Schwartz S."/>
            <person name="Taylor J."/>
            <person name="Yang S."/>
            <person name="Zhang Y."/>
            <person name="Lindpaintner K."/>
            <person name="Andrews T.D."/>
            <person name="Caccamo M."/>
            <person name="Clamp M."/>
            <person name="Clarke L."/>
            <person name="Curwen V."/>
            <person name="Durbin R.M."/>
            <person name="Eyras E."/>
            <person name="Searle S.M."/>
            <person name="Cooper G.M."/>
            <person name="Batzoglou S."/>
            <person name="Brudno M."/>
            <person name="Sidow A."/>
            <person name="Stone E.A."/>
            <person name="Payseur B.A."/>
            <person name="Bourque G."/>
            <person name="Lopez-Otin C."/>
            <person name="Puente X.S."/>
            <person name="Chakrabarti K."/>
            <person name="Chatterji S."/>
            <person name="Dewey C."/>
            <person name="Pachter L."/>
            <person name="Bray N."/>
            <person name="Yap V.B."/>
            <person name="Caspi A."/>
            <person name="Tesler G."/>
            <person name="Pevzner P.A."/>
            <person name="Haussler D."/>
            <person name="Roskin K.M."/>
            <person name="Baertsch R."/>
            <person name="Clawson H."/>
            <person name="Furey T.S."/>
            <person name="Hinrichs A.S."/>
            <person name="Karolchik D."/>
            <person name="Kent W.J."/>
            <person name="Rosenbloom K.R."/>
            <person name="Trumbower H."/>
            <person name="Weirauch M."/>
            <person name="Cooper D.N."/>
            <person name="Stenson P.D."/>
            <person name="Ma B."/>
            <person name="Brent M."/>
            <person name="Arumugam M."/>
            <person name="Shteynberg D."/>
            <person name="Copley R.R."/>
            <person name="Taylor M.S."/>
            <person name="Riethman H."/>
            <person name="Mudunuri U."/>
            <person name="Peterson J."/>
            <person name="Guyer M."/>
            <person name="Felsenfeld A."/>
            <person name="Old S."/>
            <person name="Mockrin S."/>
            <person name="Collins F.S."/>
        </authorList>
    </citation>
    <scope>NUCLEOTIDE SEQUENCE [LARGE SCALE GENOMIC DNA]</scope>
    <source>
        <strain>Brown Norway</strain>
    </source>
</reference>
<reference key="2">
    <citation type="submission" date="2005-09" db="EMBL/GenBank/DDBJ databases">
        <authorList>
            <person name="Mural R.J."/>
            <person name="Adams M.D."/>
            <person name="Myers E.W."/>
            <person name="Smith H.O."/>
            <person name="Venter J.C."/>
        </authorList>
    </citation>
    <scope>NUCLEOTIDE SEQUENCE [LARGE SCALE GENOMIC DNA]</scope>
</reference>
<reference key="3">
    <citation type="journal article" date="2012" name="Nat. Commun.">
        <title>Quantitative maps of protein phosphorylation sites across 14 different rat organs and tissues.</title>
        <authorList>
            <person name="Lundby A."/>
            <person name="Secher A."/>
            <person name="Lage K."/>
            <person name="Nordsborg N.B."/>
            <person name="Dmytriyev A."/>
            <person name="Lundby C."/>
            <person name="Olsen J.V."/>
        </authorList>
    </citation>
    <scope>IDENTIFICATION BY MASS SPECTROMETRY [LARGE SCALE ANALYSIS]</scope>
</reference>
<reference key="4">
    <citation type="journal article" date="1997" name="J. Biol. Chem.">
        <title>Cloning of a novel human diacylglycerol kinase (DGKtheta) containing three cysteine-rich domains, a proline-rich region, and a pleckstrin homology domain with an overlapping Ras-associating domain.</title>
        <authorList>
            <person name="Houssa B."/>
            <person name="Schaap D."/>
            <person name="van der Wal J."/>
            <person name="Goto K."/>
            <person name="Kondo H."/>
            <person name="Yamakawa A."/>
            <person name="Shibata M."/>
            <person name="Takenawa T."/>
            <person name="van Blitterswijk W.J."/>
        </authorList>
    </citation>
    <scope>TISSUE SPECIFICITY</scope>
</reference>
<reference key="5">
    <citation type="journal article" date="2004" name="Cell. Signal.">
        <title>Nuclear diacylglycerol kinase-theta is activated in response to nerve growth factor stimulation of PC12 cells.</title>
        <authorList>
            <person name="Tabellini G."/>
            <person name="Billi A.M."/>
            <person name="Fala F."/>
            <person name="Cappellini A."/>
            <person name="Evagelisti C."/>
            <person name="Manzoli L."/>
            <person name="Cocco L."/>
            <person name="Martelli A.M."/>
        </authorList>
    </citation>
    <scope>FUNCTION</scope>
    <scope>CATALYTIC ACTIVITY</scope>
    <scope>ACTIVITY REGULATION</scope>
    <scope>PATHWAY</scope>
    <scope>SUBCELLULAR LOCATION</scope>
</reference>
<protein>
    <recommendedName>
        <fullName evidence="10">Diacylglycerol kinase theta</fullName>
        <shortName>DAG kinase theta</shortName>
        <shortName evidence="9">DGKtheta</shortName>
        <ecNumber evidence="7">2.7.1.107</ecNumber>
        <ecNumber evidence="1">2.7.1.93</ecNumber>
    </recommendedName>
</protein>
<proteinExistence type="evidence at protein level"/>
<accession>D3ZEY4</accession>
<evidence type="ECO:0000250" key="1">
    <source>
        <dbReference type="UniProtKB" id="P52824"/>
    </source>
</evidence>
<evidence type="ECO:0000250" key="2">
    <source>
        <dbReference type="UniProtKB" id="Q6P5E8"/>
    </source>
</evidence>
<evidence type="ECO:0000255" key="3">
    <source>
        <dbReference type="PROSITE-ProRule" id="PRU00166"/>
    </source>
</evidence>
<evidence type="ECO:0000255" key="4">
    <source>
        <dbReference type="PROSITE-ProRule" id="PRU00226"/>
    </source>
</evidence>
<evidence type="ECO:0000255" key="5">
    <source>
        <dbReference type="PROSITE-ProRule" id="PRU00783"/>
    </source>
</evidence>
<evidence type="ECO:0000256" key="6">
    <source>
        <dbReference type="SAM" id="MobiDB-lite"/>
    </source>
</evidence>
<evidence type="ECO:0000269" key="7">
    <source>
    </source>
</evidence>
<evidence type="ECO:0000269" key="8">
    <source>
    </source>
</evidence>
<evidence type="ECO:0000303" key="9">
    <source>
    </source>
</evidence>
<evidence type="ECO:0000305" key="10"/>
<evidence type="ECO:0000305" key="11">
    <source>
    </source>
</evidence>
<evidence type="ECO:0000312" key="12">
    <source>
        <dbReference type="RGD" id="2320722"/>
    </source>
</evidence>
<comment type="function">
    <text evidence="1 7">Diacylglycerol kinase that converts diacylglycerol/DAG into phosphatidic acid/phosphatidate/PA and regulates the respective levels of these two bioactive lipids (PubMed:15337525). Thereby, acts as a central switch between the signaling pathways activated by these second messengers with different cellular targets and opposite effects in numerous biological processes (PubMed:15337525). Within the adrenocorticotropic hormone signaling pathway, produces phosphatidic acid which in turn activates NR5A1 and subsequent steroidogenic gene transcription (By similarity). Also functions downstream of the nerve growth factor signaling pathway being specifically activated in the nucleus by the growth factor (PubMed:15337525). Through its diacylglycerol activity also regulates synaptic vesicle endocytosis (By similarity).</text>
</comment>
<comment type="catalytic activity">
    <reaction evidence="7">
        <text>a 1,2-diacyl-sn-glycerol + ATP = a 1,2-diacyl-sn-glycero-3-phosphate + ADP + H(+)</text>
        <dbReference type="Rhea" id="RHEA:10272"/>
        <dbReference type="ChEBI" id="CHEBI:15378"/>
        <dbReference type="ChEBI" id="CHEBI:17815"/>
        <dbReference type="ChEBI" id="CHEBI:30616"/>
        <dbReference type="ChEBI" id="CHEBI:58608"/>
        <dbReference type="ChEBI" id="CHEBI:456216"/>
        <dbReference type="EC" id="2.7.1.107"/>
    </reaction>
    <physiologicalReaction direction="left-to-right" evidence="11">
        <dbReference type="Rhea" id="RHEA:10273"/>
    </physiologicalReaction>
</comment>
<comment type="catalytic activity">
    <reaction evidence="1">
        <text>a 1-O-alkyl-sn-glycerol + ATP = a 1-O-alkyl-sn-glycero-3-phosphate + ADP + H(+)</text>
        <dbReference type="Rhea" id="RHEA:16937"/>
        <dbReference type="ChEBI" id="CHEBI:15378"/>
        <dbReference type="ChEBI" id="CHEBI:15850"/>
        <dbReference type="ChEBI" id="CHEBI:30616"/>
        <dbReference type="ChEBI" id="CHEBI:58014"/>
        <dbReference type="ChEBI" id="CHEBI:456216"/>
        <dbReference type="EC" id="2.7.1.93"/>
    </reaction>
    <physiologicalReaction direction="left-to-right" evidence="1">
        <dbReference type="Rhea" id="RHEA:16938"/>
    </physiologicalReaction>
</comment>
<comment type="catalytic activity">
    <reaction evidence="1">
        <text>1-O-alkyl-2-acyl-sn-glycerol + ATP = 1-O-alkyl-2-acyl-sn-glycero-3-phosphate + ADP + H(+)</text>
        <dbReference type="Rhea" id="RHEA:44072"/>
        <dbReference type="ChEBI" id="CHEBI:15378"/>
        <dbReference type="ChEBI" id="CHEBI:30616"/>
        <dbReference type="ChEBI" id="CHEBI:52595"/>
        <dbReference type="ChEBI" id="CHEBI:73332"/>
        <dbReference type="ChEBI" id="CHEBI:456216"/>
    </reaction>
    <physiologicalReaction direction="left-to-right" evidence="1">
        <dbReference type="Rhea" id="RHEA:44073"/>
    </physiologicalReaction>
</comment>
<comment type="catalytic activity">
    <reaction evidence="7">
        <text>1,2-di-(9Z-octadecenoyl)-sn-glycerol + ATP = 1,2-di-(9Z-octadecenoyl)-sn-glycero-3-phosphate + ADP + H(+)</text>
        <dbReference type="Rhea" id="RHEA:40327"/>
        <dbReference type="ChEBI" id="CHEBI:15378"/>
        <dbReference type="ChEBI" id="CHEBI:30616"/>
        <dbReference type="ChEBI" id="CHEBI:52333"/>
        <dbReference type="ChEBI" id="CHEBI:74546"/>
        <dbReference type="ChEBI" id="CHEBI:456216"/>
    </reaction>
    <physiologicalReaction direction="left-to-right" evidence="11">
        <dbReference type="Rhea" id="RHEA:40328"/>
    </physiologicalReaction>
</comment>
<comment type="catalytic activity">
    <reaction evidence="1">
        <text>1-O-hexadecyl-sn-glycerol + ATP = 1-O-hexadecyl-sn-glycero-3-phosphate + ADP + H(+)</text>
        <dbReference type="Rhea" id="RHEA:41672"/>
        <dbReference type="ChEBI" id="CHEBI:15378"/>
        <dbReference type="ChEBI" id="CHEBI:30616"/>
        <dbReference type="ChEBI" id="CHEBI:34115"/>
        <dbReference type="ChEBI" id="CHEBI:77580"/>
        <dbReference type="ChEBI" id="CHEBI:456216"/>
    </reaction>
    <physiologicalReaction direction="left-to-right" evidence="1">
        <dbReference type="Rhea" id="RHEA:41673"/>
    </physiologicalReaction>
</comment>
<comment type="catalytic activity">
    <reaction evidence="1">
        <text>1-O-hexadecyl-2-acetyl-sn-glycerol + ATP = 1-O-hexadecyl-2-acetyl-sn-glycero-3-phosphate + ADP + H(+)</text>
        <dbReference type="Rhea" id="RHEA:41676"/>
        <dbReference type="ChEBI" id="CHEBI:15378"/>
        <dbReference type="ChEBI" id="CHEBI:30616"/>
        <dbReference type="ChEBI" id="CHEBI:75936"/>
        <dbReference type="ChEBI" id="CHEBI:78385"/>
        <dbReference type="ChEBI" id="CHEBI:456216"/>
    </reaction>
    <physiologicalReaction direction="left-to-right" evidence="1">
        <dbReference type="Rhea" id="RHEA:41677"/>
    </physiologicalReaction>
</comment>
<comment type="catalytic activity">
    <reaction evidence="1">
        <text>1-octadecanoyl-2-(5Z,8Z,11Z,14Z-eicosatetraenoyl)-sn-glycerol + ATP = 1-octadecanoyl-2-(5Z,8Z,11Z,14Z-eicosatetraenoyl)-sn-glycero-3-phosphate + ADP + H(+)</text>
        <dbReference type="Rhea" id="RHEA:40323"/>
        <dbReference type="ChEBI" id="CHEBI:15378"/>
        <dbReference type="ChEBI" id="CHEBI:30616"/>
        <dbReference type="ChEBI" id="CHEBI:75728"/>
        <dbReference type="ChEBI" id="CHEBI:77091"/>
        <dbReference type="ChEBI" id="CHEBI:456216"/>
    </reaction>
    <physiologicalReaction direction="left-to-right" evidence="1">
        <dbReference type="Rhea" id="RHEA:40324"/>
    </physiologicalReaction>
</comment>
<comment type="activity regulation">
    <text evidence="7">Activated by phosphatidylserine.</text>
</comment>
<comment type="pathway">
    <text evidence="7">Lipid metabolism; glycerolipid metabolism.</text>
</comment>
<comment type="subunit">
    <text evidence="1">Interacts with RHOA (constitutively activated, GTP-bound); the interaction inhibits DGKQ. Interacts with PRKCE. Interacts with PRKCH. Interacts with PLCB1. Interacts with NR5A1; the interaction requires both LXXLL motifs in DGKQ and is required for full phosphatidic acid-mediated activation of NR5A1.</text>
</comment>
<comment type="subcellular location">
    <subcellularLocation>
        <location evidence="1">Cytoplasm</location>
    </subcellularLocation>
    <subcellularLocation>
        <location evidence="2">Cytoplasm</location>
        <location evidence="2">Cytosol</location>
    </subcellularLocation>
    <subcellularLocation>
        <location evidence="1">Cell membrane</location>
    </subcellularLocation>
    <subcellularLocation>
        <location evidence="2">Synapse</location>
    </subcellularLocation>
    <subcellularLocation>
        <location evidence="1">Cytoplasm</location>
        <location evidence="1">Cytoskeleton</location>
    </subcellularLocation>
    <subcellularLocation>
        <location evidence="7">Nucleus</location>
    </subcellularLocation>
    <subcellularLocation>
        <location evidence="7">Nucleus speckle</location>
    </subcellularLocation>
    <subcellularLocation>
        <location evidence="7">Nucleus matrix</location>
    </subcellularLocation>
    <text evidence="1 7">Translocates to the plasma membrane in response to steroid hormone receptor stimulation. Translocation to the plasma membrane is dependent on G-protein coupled receptor stimulation and subsequent activation of PRKCE and probably PRKCH. Translocates to the nucleus in response to thrombin stimulation (By similarity). Association with the nuclear matrix is regulated by nerve growth factor (PubMed:15337525).</text>
</comment>
<comment type="tissue specificity">
    <text evidence="8">Widely expressed with higher expression in the brain and, to a lesser extent, in the small intestine, duodenum, and liver (PubMed:9099683). In brain, expressed in gray matter (PubMed:9099683). Expression is most intense in the cerebellar cortex and hippocampus, while moderate expression is seen in the olfactory bulb neuronal layers and brain stem nuclei (PubMed:9099683). In the cerebellar cortex, equally expressed in both the Purkinje cell somata and the granule cells (PubMed:9099683).</text>
</comment>
<comment type="domain">
    <text evidence="1">The L-X-X-L-L repeats are both required for binding and phosphatidic acid-mediated activation of the nuclear receptor NR5A1.</text>
</comment>
<comment type="PTM">
    <text evidence="1">Phosphorylated by PRKCE and PRKCH in vitro.</text>
</comment>
<comment type="similarity">
    <text evidence="10">Belongs to the eukaryotic diacylglycerol kinase family.</text>
</comment>
<sequence length="937" mass="102545">MATAAESGARTWPGSGSPRLGSPAGSPVLGISGRARPGSGPERTGRAIGSVAPGHSFRKVTLTKPTFCHLCSDFIWGLAGFLCDVCNFMSHEKCLKQVKTPCTSIAPSLVRVPVAHCFGSLGLYKRKFCVVCRKSLEVPAFRCEVCELHVHPDCVPFACSDCRQCHQDGQHDYDTYHHHWREGNLPSGARCEVCRKTCGSSDVLAGVRCEWCGVQAHSVCSTALTPECTFGRLRSMVLPPSCVRLLSRNFSKMHCFRIPETMVLELGDGDDGLDGSAAVGTGREVSAATESTKQTLKIFDGNDSMRKNQFRLVTVSRLARNEEVMEAALRAYYINEDPKDFQLQALPLTLLSGNAQALGKAGTTEEETSKDSGPGDSVPEAWVIRSLPRTQEILKIYPDWLKVGVAYVSIRVNSQSTARSVVQEVLPLFGRQVEDQERFQLIEVLMSSRQVQRTVLVDEEPLLDRLRDIRQTSVRQASQTRFYVAEARAVTPHVSLFVGGLPPGLSPQDYSNLLHEAMATKAAVVSVSHVYSLQGAVVLDVTCFAEAERLYMLARDTAVHGRPLTALVLPDVLHTKLPPDCCPLLVFVNPKSGGLKGRELLCSFRKLLNPHQVFELTNGGPLPGFHLFSQVPCFRVLVCGGDGTVGWVLAALEETRRHLACPEPSVAILPLGTGNDLGRVLRWGAGYSGEDPFSVLVSVDEADAVLMDRWTILLDAHEIDSTENNVVETEPPKIVQMNNYCGIGIDAELSLDFHQAREEEPGKFTSRFHNKGVYVRVGLQKISHSRSLHKEIRLQVEQQEVELPSIEGLIFINIPSWGSGADLWGSDSDSRFEKPRIDDGLLEVVGVTGVVHMGQVQGGLRSGIRIAQGSYFRVTLLKATPVQVDGEPWIQAPGHMIISATAPKVHMLRKAKQKPRKAGAIRDTRVDTLPAPEGNPL</sequence>
<feature type="chain" id="PRO_0000450756" description="Diacylglycerol kinase theta">
    <location>
        <begin position="1"/>
        <end position="937"/>
    </location>
</feature>
<feature type="domain" description="Ras-associating" evidence="3">
    <location>
        <begin position="390"/>
        <end position="489"/>
    </location>
</feature>
<feature type="domain" description="DAGKc" evidence="5">
    <location>
        <begin position="579"/>
        <end position="716"/>
    </location>
</feature>
<feature type="zinc finger region" description="Phorbol-ester/DAG-type 1" evidence="4">
    <location>
        <begin position="54"/>
        <end position="102"/>
    </location>
</feature>
<feature type="zinc finger region" description="Phorbol-ester/DAG-type 2" evidence="4">
    <location>
        <begin position="115"/>
        <end position="162"/>
    </location>
</feature>
<feature type="zinc finger region" description="Phorbol-ester/DAG-type 3" evidence="4">
    <location>
        <begin position="177"/>
        <end position="228"/>
    </location>
</feature>
<feature type="region of interest" description="Disordered" evidence="6">
    <location>
        <begin position="1"/>
        <end position="48"/>
    </location>
</feature>
<feature type="region of interest" description="Disordered" evidence="6">
    <location>
        <begin position="359"/>
        <end position="378"/>
    </location>
</feature>
<feature type="region of interest" description="Disordered" evidence="6">
    <location>
        <begin position="911"/>
        <end position="937"/>
    </location>
</feature>
<feature type="short sequence motif" description="LXXLL motif 1" evidence="1">
    <location>
        <begin position="550"/>
        <end position="554"/>
    </location>
</feature>
<feature type="short sequence motif" description="LXXLL motif 2" evidence="1">
    <location>
        <begin position="569"/>
        <end position="573"/>
    </location>
</feature>
<feature type="modified residue" description="Phosphoserine" evidence="2">
    <location>
        <position position="22"/>
    </location>
</feature>
<feature type="modified residue" description="Phosphoserine" evidence="2">
    <location>
        <position position="26"/>
    </location>
</feature>
<organism>
    <name type="scientific">Rattus norvegicus</name>
    <name type="common">Rat</name>
    <dbReference type="NCBI Taxonomy" id="10116"/>
    <lineage>
        <taxon>Eukaryota</taxon>
        <taxon>Metazoa</taxon>
        <taxon>Chordata</taxon>
        <taxon>Craniata</taxon>
        <taxon>Vertebrata</taxon>
        <taxon>Euteleostomi</taxon>
        <taxon>Mammalia</taxon>
        <taxon>Eutheria</taxon>
        <taxon>Euarchontoglires</taxon>
        <taxon>Glires</taxon>
        <taxon>Rodentia</taxon>
        <taxon>Myomorpha</taxon>
        <taxon>Muroidea</taxon>
        <taxon>Muridae</taxon>
        <taxon>Murinae</taxon>
        <taxon>Rattus</taxon>
    </lineage>
</organism>
<gene>
    <name evidence="12" type="primary">Dgkq</name>
</gene>
<keyword id="KW-0067">ATP-binding</keyword>
<keyword id="KW-1003">Cell membrane</keyword>
<keyword id="KW-0963">Cytoplasm</keyword>
<keyword id="KW-0206">Cytoskeleton</keyword>
<keyword id="KW-0418">Kinase</keyword>
<keyword id="KW-0443">Lipid metabolism</keyword>
<keyword id="KW-0472">Membrane</keyword>
<keyword id="KW-0479">Metal-binding</keyword>
<keyword id="KW-0547">Nucleotide-binding</keyword>
<keyword id="KW-0539">Nucleus</keyword>
<keyword id="KW-0597">Phosphoprotein</keyword>
<keyword id="KW-1185">Reference proteome</keyword>
<keyword id="KW-0677">Repeat</keyword>
<keyword id="KW-0770">Synapse</keyword>
<keyword id="KW-0808">Transferase</keyword>
<keyword id="KW-0862">Zinc</keyword>
<keyword id="KW-0863">Zinc-finger</keyword>
<dbReference type="EC" id="2.7.1.107" evidence="7"/>
<dbReference type="EC" id="2.7.1.93" evidence="1"/>
<dbReference type="EMBL" id="AC117047">
    <property type="status" value="NOT_ANNOTATED_CDS"/>
    <property type="molecule type" value="Genomic_DNA"/>
</dbReference>
<dbReference type="EMBL" id="CH474079">
    <property type="protein sequence ID" value="EDL84024.1"/>
    <property type="molecule type" value="Genomic_DNA"/>
</dbReference>
<dbReference type="RefSeq" id="NP_001185733.1">
    <property type="nucleotide sequence ID" value="NM_001198804.1"/>
</dbReference>
<dbReference type="SMR" id="D3ZEY4"/>
<dbReference type="FunCoup" id="D3ZEY4">
    <property type="interactions" value="1330"/>
</dbReference>
<dbReference type="IntAct" id="D3ZEY4">
    <property type="interactions" value="1"/>
</dbReference>
<dbReference type="STRING" id="10116.ENSRNOP00000036466"/>
<dbReference type="GlyGen" id="D3ZEY4">
    <property type="glycosylation" value="1 site"/>
</dbReference>
<dbReference type="iPTMnet" id="D3ZEY4"/>
<dbReference type="PhosphoSitePlus" id="D3ZEY4"/>
<dbReference type="PaxDb" id="10116-ENSRNOP00000036466"/>
<dbReference type="PeptideAtlas" id="D3ZEY4"/>
<dbReference type="Ensembl" id="ENSRNOT00000032056.6">
    <property type="protein sequence ID" value="ENSRNOP00000036466.4"/>
    <property type="gene ID" value="ENSRNOG00000024112.6"/>
</dbReference>
<dbReference type="GeneID" id="100361138"/>
<dbReference type="KEGG" id="rno:100361138"/>
<dbReference type="UCSC" id="RGD:2320722">
    <property type="organism name" value="rat"/>
</dbReference>
<dbReference type="AGR" id="RGD:2320722"/>
<dbReference type="CTD" id="1609"/>
<dbReference type="RGD" id="2320722">
    <property type="gene designation" value="Dgkq"/>
</dbReference>
<dbReference type="eggNOG" id="KOG1169">
    <property type="taxonomic scope" value="Eukaryota"/>
</dbReference>
<dbReference type="GeneTree" id="ENSGT00940000159492"/>
<dbReference type="HOGENOM" id="CLU_003770_0_0_1"/>
<dbReference type="InParanoid" id="D3ZEY4"/>
<dbReference type="OMA" id="TCKDLWK"/>
<dbReference type="OrthoDB" id="242257at2759"/>
<dbReference type="PhylomeDB" id="D3ZEY4"/>
<dbReference type="TreeFam" id="TF312817"/>
<dbReference type="Reactome" id="R-RNO-114508">
    <property type="pathway name" value="Effects of PIP2 hydrolysis"/>
</dbReference>
<dbReference type="UniPathway" id="UPA00230"/>
<dbReference type="PRO" id="PR:D3ZEY4"/>
<dbReference type="Proteomes" id="UP000002494">
    <property type="component" value="Chromosome 14"/>
</dbReference>
<dbReference type="Proteomes" id="UP000234681">
    <property type="component" value="Chromosome 14"/>
</dbReference>
<dbReference type="Bgee" id="ENSRNOG00000024112">
    <property type="expression patterns" value="Expressed in jejunum and 20 other cell types or tissues"/>
</dbReference>
<dbReference type="GO" id="GO:0005737">
    <property type="term" value="C:cytoplasm"/>
    <property type="evidence" value="ECO:0000266"/>
    <property type="project" value="RGD"/>
</dbReference>
<dbReference type="GO" id="GO:0005856">
    <property type="term" value="C:cytoskeleton"/>
    <property type="evidence" value="ECO:0000266"/>
    <property type="project" value="RGD"/>
</dbReference>
<dbReference type="GO" id="GO:0005829">
    <property type="term" value="C:cytosol"/>
    <property type="evidence" value="ECO:0000266"/>
    <property type="project" value="RGD"/>
</dbReference>
<dbReference type="GO" id="GO:0005768">
    <property type="term" value="C:endosome"/>
    <property type="evidence" value="ECO:0000266"/>
    <property type="project" value="RGD"/>
</dbReference>
<dbReference type="GO" id="GO:0098978">
    <property type="term" value="C:glutamatergic synapse"/>
    <property type="evidence" value="ECO:0000266"/>
    <property type="project" value="RGD"/>
</dbReference>
<dbReference type="GO" id="GO:0016020">
    <property type="term" value="C:membrane"/>
    <property type="evidence" value="ECO:0000318"/>
    <property type="project" value="GO_Central"/>
</dbReference>
<dbReference type="GO" id="GO:0016363">
    <property type="term" value="C:nuclear matrix"/>
    <property type="evidence" value="ECO:0000315"/>
    <property type="project" value="ParkinsonsUK-UCL"/>
</dbReference>
<dbReference type="GO" id="GO:0016607">
    <property type="term" value="C:nuclear speck"/>
    <property type="evidence" value="ECO:0000314"/>
    <property type="project" value="ParkinsonsUK-UCL"/>
</dbReference>
<dbReference type="GO" id="GO:0005634">
    <property type="term" value="C:nucleus"/>
    <property type="evidence" value="ECO:0000266"/>
    <property type="project" value="RGD"/>
</dbReference>
<dbReference type="GO" id="GO:0005886">
    <property type="term" value="C:plasma membrane"/>
    <property type="evidence" value="ECO:0000266"/>
    <property type="project" value="RGD"/>
</dbReference>
<dbReference type="GO" id="GO:0098794">
    <property type="term" value="C:postsynapse"/>
    <property type="evidence" value="ECO:0000266"/>
    <property type="project" value="RGD"/>
</dbReference>
<dbReference type="GO" id="GO:0098793">
    <property type="term" value="C:presynapse"/>
    <property type="evidence" value="ECO:0000266"/>
    <property type="project" value="RGD"/>
</dbReference>
<dbReference type="GO" id="GO:0012506">
    <property type="term" value="C:vesicle membrane"/>
    <property type="evidence" value="ECO:0000266"/>
    <property type="project" value="RGD"/>
</dbReference>
<dbReference type="GO" id="GO:0005524">
    <property type="term" value="F:ATP binding"/>
    <property type="evidence" value="ECO:0007669"/>
    <property type="project" value="UniProtKB-KW"/>
</dbReference>
<dbReference type="GO" id="GO:0004143">
    <property type="term" value="F:ATP-dependent diacylglycerol kinase activity"/>
    <property type="evidence" value="ECO:0000315"/>
    <property type="project" value="ParkinsonsUK-UCL"/>
</dbReference>
<dbReference type="GO" id="GO:0140297">
    <property type="term" value="F:DNA-binding transcription factor binding"/>
    <property type="evidence" value="ECO:0000266"/>
    <property type="project" value="RGD"/>
</dbReference>
<dbReference type="GO" id="GO:0019900">
    <property type="term" value="F:kinase binding"/>
    <property type="evidence" value="ECO:0000266"/>
    <property type="project" value="RGD"/>
</dbReference>
<dbReference type="GO" id="GO:0043274">
    <property type="term" value="F:phospholipase binding"/>
    <property type="evidence" value="ECO:0000266"/>
    <property type="project" value="RGD"/>
</dbReference>
<dbReference type="GO" id="GO:0030297">
    <property type="term" value="F:transmembrane receptor protein tyrosine kinase activator activity"/>
    <property type="evidence" value="ECO:0000266"/>
    <property type="project" value="RGD"/>
</dbReference>
<dbReference type="GO" id="GO:0008270">
    <property type="term" value="F:zinc ion binding"/>
    <property type="evidence" value="ECO:0007669"/>
    <property type="project" value="UniProtKB-KW"/>
</dbReference>
<dbReference type="GO" id="GO:0007189">
    <property type="term" value="P:adenylate cyclase-activating G protein-coupled receptor signaling pathway"/>
    <property type="evidence" value="ECO:0000266"/>
    <property type="project" value="RGD"/>
</dbReference>
<dbReference type="GO" id="GO:1903413">
    <property type="term" value="P:cellular response to bile acid"/>
    <property type="evidence" value="ECO:0000266"/>
    <property type="project" value="RGD"/>
</dbReference>
<dbReference type="GO" id="GO:0046339">
    <property type="term" value="P:diacylglycerol metabolic process"/>
    <property type="evidence" value="ECO:0000250"/>
    <property type="project" value="UniProtKB"/>
</dbReference>
<dbReference type="GO" id="GO:0046486">
    <property type="term" value="P:glycerolipid metabolic process"/>
    <property type="evidence" value="ECO:0000266"/>
    <property type="project" value="RGD"/>
</dbReference>
<dbReference type="GO" id="GO:0035556">
    <property type="term" value="P:intracellular signal transduction"/>
    <property type="evidence" value="ECO:0000318"/>
    <property type="project" value="GO_Central"/>
</dbReference>
<dbReference type="GO" id="GO:0046834">
    <property type="term" value="P:lipid phosphorylation"/>
    <property type="evidence" value="ECO:0000250"/>
    <property type="project" value="UniProtKB"/>
</dbReference>
<dbReference type="GO" id="GO:0010629">
    <property type="term" value="P:negative regulation of gene expression"/>
    <property type="evidence" value="ECO:0000266"/>
    <property type="project" value="RGD"/>
</dbReference>
<dbReference type="GO" id="GO:0006654">
    <property type="term" value="P:phosphatidic acid biosynthetic process"/>
    <property type="evidence" value="ECO:0000250"/>
    <property type="project" value="UniProtKB"/>
</dbReference>
<dbReference type="GO" id="GO:0007200">
    <property type="term" value="P:phospholipase C-activating G protein-coupled receptor signaling pathway"/>
    <property type="evidence" value="ECO:0000266"/>
    <property type="project" value="RGD"/>
</dbReference>
<dbReference type="GO" id="GO:0010628">
    <property type="term" value="P:positive regulation of gene expression"/>
    <property type="evidence" value="ECO:0000266"/>
    <property type="project" value="RGD"/>
</dbReference>
<dbReference type="GO" id="GO:0090181">
    <property type="term" value="P:regulation of cholesterol metabolic process"/>
    <property type="evidence" value="ECO:0000266"/>
    <property type="project" value="RGD"/>
</dbReference>
<dbReference type="GO" id="GO:2000064">
    <property type="term" value="P:regulation of cortisol biosynthetic process"/>
    <property type="evidence" value="ECO:0000266"/>
    <property type="project" value="RGD"/>
</dbReference>
<dbReference type="GO" id="GO:0008277">
    <property type="term" value="P:regulation of G protein-coupled receptor signaling pathway"/>
    <property type="evidence" value="ECO:0000266"/>
    <property type="project" value="RGD"/>
</dbReference>
<dbReference type="GO" id="GO:0006111">
    <property type="term" value="P:regulation of gluconeogenesis"/>
    <property type="evidence" value="ECO:0000266"/>
    <property type="project" value="RGD"/>
</dbReference>
<dbReference type="GO" id="GO:2000182">
    <property type="term" value="P:regulation of progesterone biosynthetic process"/>
    <property type="evidence" value="ECO:0000266"/>
    <property type="project" value="RGD"/>
</dbReference>
<dbReference type="GO" id="GO:1900242">
    <property type="term" value="P:regulation of synaptic vesicle endocytosis"/>
    <property type="evidence" value="ECO:0000266"/>
    <property type="project" value="RGD"/>
</dbReference>
<dbReference type="GO" id="GO:1903432">
    <property type="term" value="P:regulation of TORC1 signaling"/>
    <property type="evidence" value="ECO:0000266"/>
    <property type="project" value="RGD"/>
</dbReference>
<dbReference type="GO" id="GO:0006357">
    <property type="term" value="P:regulation of transcription by RNA polymerase II"/>
    <property type="evidence" value="ECO:0000266"/>
    <property type="project" value="RGD"/>
</dbReference>
<dbReference type="GO" id="GO:0051591">
    <property type="term" value="P:response to cAMP"/>
    <property type="evidence" value="ECO:0000266"/>
    <property type="project" value="RGD"/>
</dbReference>
<dbReference type="GO" id="GO:0070493">
    <property type="term" value="P:thrombin-activated receptor signaling pathway"/>
    <property type="evidence" value="ECO:0000266"/>
    <property type="project" value="RGD"/>
</dbReference>
<dbReference type="CDD" id="cd20803">
    <property type="entry name" value="C1_DGKtheta_typeV_rpt1"/>
    <property type="match status" value="1"/>
</dbReference>
<dbReference type="CDD" id="cd20804">
    <property type="entry name" value="C1_DGKtheta_typeV_rpt2"/>
    <property type="match status" value="1"/>
</dbReference>
<dbReference type="CDD" id="cd20854">
    <property type="entry name" value="C1_DGKtheta_typeV_rpt3"/>
    <property type="match status" value="1"/>
</dbReference>
<dbReference type="CDD" id="cd17111">
    <property type="entry name" value="RA1_DAGK-theta"/>
    <property type="match status" value="1"/>
</dbReference>
<dbReference type="CDD" id="cd01783">
    <property type="entry name" value="RA2_DAGK-theta"/>
    <property type="match status" value="1"/>
</dbReference>
<dbReference type="FunFam" id="2.60.200.40:FF:000004">
    <property type="entry name" value="Diacylglycerol kinase"/>
    <property type="match status" value="1"/>
</dbReference>
<dbReference type="FunFam" id="3.10.20.90:FF:000188">
    <property type="entry name" value="Diacylglycerol kinase"/>
    <property type="match status" value="1"/>
</dbReference>
<dbReference type="FunFam" id="3.30.60.20:FF:000002">
    <property type="entry name" value="Diacylglycerol kinase"/>
    <property type="match status" value="1"/>
</dbReference>
<dbReference type="FunFam" id="3.30.60.20:FF:000053">
    <property type="entry name" value="Diacylglycerol kinase"/>
    <property type="match status" value="1"/>
</dbReference>
<dbReference type="FunFam" id="3.40.50.10330:FF:000012">
    <property type="entry name" value="Diacylglycerol kinase"/>
    <property type="match status" value="1"/>
</dbReference>
<dbReference type="Gene3D" id="2.60.200.40">
    <property type="match status" value="1"/>
</dbReference>
<dbReference type="Gene3D" id="3.30.60.20">
    <property type="match status" value="2"/>
</dbReference>
<dbReference type="Gene3D" id="3.10.20.90">
    <property type="entry name" value="Phosphatidylinositol 3-kinase Catalytic Subunit, Chain A, domain 1"/>
    <property type="match status" value="1"/>
</dbReference>
<dbReference type="Gene3D" id="3.40.50.10330">
    <property type="entry name" value="Probable inorganic polyphosphate/atp-NAD kinase, domain 1"/>
    <property type="match status" value="1"/>
</dbReference>
<dbReference type="InterPro" id="IPR017438">
    <property type="entry name" value="ATP-NAD_kinase_N"/>
</dbReference>
<dbReference type="InterPro" id="IPR046349">
    <property type="entry name" value="C1-like_sf"/>
</dbReference>
<dbReference type="InterPro" id="IPR020454">
    <property type="entry name" value="DAG/PE-bd"/>
</dbReference>
<dbReference type="InterPro" id="IPR037607">
    <property type="entry name" value="DGK"/>
</dbReference>
<dbReference type="InterPro" id="IPR056392">
    <property type="entry name" value="DGKtheta_RBD"/>
</dbReference>
<dbReference type="InterPro" id="IPR000756">
    <property type="entry name" value="Diacylglycerol_kin_accessory"/>
</dbReference>
<dbReference type="InterPro" id="IPR001206">
    <property type="entry name" value="Diacylglycerol_kinase_cat_dom"/>
</dbReference>
<dbReference type="InterPro" id="IPR016064">
    <property type="entry name" value="NAD/diacylglycerol_kinase_sf"/>
</dbReference>
<dbReference type="InterPro" id="IPR002219">
    <property type="entry name" value="PE/DAG-bd"/>
</dbReference>
<dbReference type="InterPro" id="IPR000159">
    <property type="entry name" value="RA_dom"/>
</dbReference>
<dbReference type="InterPro" id="IPR029071">
    <property type="entry name" value="Ubiquitin-like_domsf"/>
</dbReference>
<dbReference type="PANTHER" id="PTHR11255">
    <property type="entry name" value="DIACYLGLYCEROL KINASE"/>
    <property type="match status" value="1"/>
</dbReference>
<dbReference type="PANTHER" id="PTHR11255:SF54">
    <property type="entry name" value="DIACYLGLYCEROL KINASE THETA"/>
    <property type="match status" value="1"/>
</dbReference>
<dbReference type="Pfam" id="PF00130">
    <property type="entry name" value="C1_1"/>
    <property type="match status" value="2"/>
</dbReference>
<dbReference type="Pfam" id="PF00609">
    <property type="entry name" value="DAGK_acc"/>
    <property type="match status" value="1"/>
</dbReference>
<dbReference type="Pfam" id="PF00781">
    <property type="entry name" value="DAGK_cat"/>
    <property type="match status" value="1"/>
</dbReference>
<dbReference type="Pfam" id="PF00788">
    <property type="entry name" value="RA"/>
    <property type="match status" value="1"/>
</dbReference>
<dbReference type="Pfam" id="PF24099">
    <property type="entry name" value="RBD_DGKtheta"/>
    <property type="match status" value="1"/>
</dbReference>
<dbReference type="PRINTS" id="PR00008">
    <property type="entry name" value="DAGPEDOMAIN"/>
</dbReference>
<dbReference type="SMART" id="SM00109">
    <property type="entry name" value="C1"/>
    <property type="match status" value="3"/>
</dbReference>
<dbReference type="SMART" id="SM00045">
    <property type="entry name" value="DAGKa"/>
    <property type="match status" value="1"/>
</dbReference>
<dbReference type="SMART" id="SM00046">
    <property type="entry name" value="DAGKc"/>
    <property type="match status" value="1"/>
</dbReference>
<dbReference type="SMART" id="SM00314">
    <property type="entry name" value="RA"/>
    <property type="match status" value="1"/>
</dbReference>
<dbReference type="SUPFAM" id="SSF57889">
    <property type="entry name" value="Cysteine-rich domain"/>
    <property type="match status" value="3"/>
</dbReference>
<dbReference type="SUPFAM" id="SSF111331">
    <property type="entry name" value="NAD kinase/diacylglycerol kinase-like"/>
    <property type="match status" value="1"/>
</dbReference>
<dbReference type="SUPFAM" id="SSF54236">
    <property type="entry name" value="Ubiquitin-like"/>
    <property type="match status" value="2"/>
</dbReference>
<dbReference type="PROSITE" id="PS50146">
    <property type="entry name" value="DAGK"/>
    <property type="match status" value="1"/>
</dbReference>
<dbReference type="PROSITE" id="PS50200">
    <property type="entry name" value="RA"/>
    <property type="match status" value="1"/>
</dbReference>
<dbReference type="PROSITE" id="PS00479">
    <property type="entry name" value="ZF_DAG_PE_1"/>
    <property type="match status" value="3"/>
</dbReference>
<dbReference type="PROSITE" id="PS50081">
    <property type="entry name" value="ZF_DAG_PE_2"/>
    <property type="match status" value="3"/>
</dbReference>